<dbReference type="EMBL" id="AF047884">
    <property type="protein sequence ID" value="AAC15878.1"/>
    <property type="molecule type" value="mRNA"/>
</dbReference>
<dbReference type="SMR" id="O73763"/>
<dbReference type="GO" id="GO:0005509">
    <property type="term" value="F:calcium ion binding"/>
    <property type="evidence" value="ECO:0007669"/>
    <property type="project" value="InterPro"/>
</dbReference>
<dbReference type="GO" id="GO:0007601">
    <property type="term" value="P:visual perception"/>
    <property type="evidence" value="ECO:0007669"/>
    <property type="project" value="UniProtKB-KW"/>
</dbReference>
<dbReference type="CDD" id="cd00051">
    <property type="entry name" value="EFh"/>
    <property type="match status" value="2"/>
</dbReference>
<dbReference type="FunFam" id="1.10.238.10:FF:000052">
    <property type="entry name" value="Guanylate cyclase activator 1A"/>
    <property type="match status" value="1"/>
</dbReference>
<dbReference type="Gene3D" id="1.10.238.10">
    <property type="entry name" value="EF-hand"/>
    <property type="match status" value="2"/>
</dbReference>
<dbReference type="InterPro" id="IPR011992">
    <property type="entry name" value="EF-hand-dom_pair"/>
</dbReference>
<dbReference type="InterPro" id="IPR018247">
    <property type="entry name" value="EF_Hand_1_Ca_BS"/>
</dbReference>
<dbReference type="InterPro" id="IPR002048">
    <property type="entry name" value="EF_hand_dom"/>
</dbReference>
<dbReference type="InterPro" id="IPR028846">
    <property type="entry name" value="Recoverin"/>
</dbReference>
<dbReference type="PANTHER" id="PTHR23055">
    <property type="entry name" value="CALCIUM BINDING PROTEINS"/>
    <property type="match status" value="1"/>
</dbReference>
<dbReference type="PANTHER" id="PTHR23055:SF85">
    <property type="entry name" value="SI:CH211-245J22.3"/>
    <property type="match status" value="1"/>
</dbReference>
<dbReference type="Pfam" id="PF13499">
    <property type="entry name" value="EF-hand_7"/>
    <property type="match status" value="1"/>
</dbReference>
<dbReference type="Pfam" id="PF13833">
    <property type="entry name" value="EF-hand_8"/>
    <property type="match status" value="1"/>
</dbReference>
<dbReference type="PRINTS" id="PR00450">
    <property type="entry name" value="RECOVERIN"/>
</dbReference>
<dbReference type="SMART" id="SM00054">
    <property type="entry name" value="EFh"/>
    <property type="match status" value="3"/>
</dbReference>
<dbReference type="SUPFAM" id="SSF47473">
    <property type="entry name" value="EF-hand"/>
    <property type="match status" value="1"/>
</dbReference>
<dbReference type="PROSITE" id="PS00018">
    <property type="entry name" value="EF_HAND_1"/>
    <property type="match status" value="2"/>
</dbReference>
<dbReference type="PROSITE" id="PS50222">
    <property type="entry name" value="EF_HAND_2"/>
    <property type="match status" value="4"/>
</dbReference>
<comment type="function">
    <text>Does not stimulate guanylyl cyclase (GC) when free calcium ion concentration is low, but inhibits GC when free calcium ions concentration is elevated.</text>
</comment>
<comment type="tissue specificity">
    <text>Retina; inner segments, somata and synaptic terminals of cone receptors.</text>
</comment>
<comment type="miscellaneous">
    <text evidence="1">Binds two calcium ions.</text>
</comment>
<proteinExistence type="evidence at transcript level"/>
<evidence type="ECO:0000250" key="1"/>
<evidence type="ECO:0000255" key="2"/>
<evidence type="ECO:0000255" key="3">
    <source>
        <dbReference type="PROSITE-ProRule" id="PRU00448"/>
    </source>
</evidence>
<protein>
    <recommendedName>
        <fullName>Guanylyl cyclase inhibitory protein</fullName>
    </recommendedName>
</protein>
<reference key="1">
    <citation type="journal article" date="1998" name="Eur. J. Biochem.">
        <title>Guanylate-cyclase-inhibitory protein is a frog retinal Ca2+-binding protein related to mammalian guanylate-cyclase-activating proteins.</title>
        <authorList>
            <person name="Li N."/>
            <person name="Fariss R.N."/>
            <person name="Zhang K."/>
            <person name="Otto-Bruc A.E."/>
            <person name="Haeseleer F."/>
            <person name="Bronson J.D."/>
            <person name="Qin N."/>
            <person name="Yamazaki A."/>
            <person name="Subbaraya I."/>
            <person name="Milam A.H."/>
            <person name="Palczewski K."/>
            <person name="Baehr W."/>
        </authorList>
    </citation>
    <scope>NUCLEOTIDE SEQUENCE [MRNA]</scope>
    <source>
        <tissue>Retina</tissue>
    </source>
</reference>
<gene>
    <name type="primary">GCIP</name>
</gene>
<accession>O73763</accession>
<feature type="initiator methionine" description="Removed" evidence="2">
    <location>
        <position position="1"/>
    </location>
</feature>
<feature type="chain" id="PRO_0000073813" description="Guanylyl cyclase inhibitory protein">
    <location>
        <begin position="2"/>
        <end position="206"/>
    </location>
</feature>
<feature type="domain" description="EF-hand 1" evidence="3">
    <location>
        <begin position="31"/>
        <end position="49"/>
    </location>
</feature>
<feature type="domain" description="EF-hand 2" evidence="3">
    <location>
        <begin position="51"/>
        <end position="86"/>
    </location>
</feature>
<feature type="domain" description="EF-hand 3" evidence="3">
    <location>
        <begin position="87"/>
        <end position="122"/>
    </location>
</feature>
<feature type="domain" description="EF-hand 4" evidence="3">
    <location>
        <begin position="135"/>
        <end position="170"/>
    </location>
</feature>
<feature type="binding site" evidence="3">
    <location>
        <position position="64"/>
    </location>
    <ligand>
        <name>Ca(2+)</name>
        <dbReference type="ChEBI" id="CHEBI:29108"/>
        <label>1</label>
    </ligand>
</feature>
<feature type="binding site" evidence="3">
    <location>
        <position position="66"/>
    </location>
    <ligand>
        <name>Ca(2+)</name>
        <dbReference type="ChEBI" id="CHEBI:29108"/>
        <label>1</label>
    </ligand>
</feature>
<feature type="binding site" evidence="3">
    <location>
        <position position="68"/>
    </location>
    <ligand>
        <name>Ca(2+)</name>
        <dbReference type="ChEBI" id="CHEBI:29108"/>
        <label>1</label>
    </ligand>
</feature>
<feature type="binding site" evidence="3">
    <location>
        <position position="75"/>
    </location>
    <ligand>
        <name>Ca(2+)</name>
        <dbReference type="ChEBI" id="CHEBI:29108"/>
        <label>1</label>
    </ligand>
</feature>
<feature type="binding site" evidence="3">
    <location>
        <position position="100"/>
    </location>
    <ligand>
        <name>Ca(2+)</name>
        <dbReference type="ChEBI" id="CHEBI:29108"/>
        <label>2</label>
    </ligand>
</feature>
<feature type="binding site" evidence="3">
    <location>
        <position position="102"/>
    </location>
    <ligand>
        <name>Ca(2+)</name>
        <dbReference type="ChEBI" id="CHEBI:29108"/>
        <label>2</label>
    </ligand>
</feature>
<feature type="binding site" evidence="3">
    <location>
        <position position="104"/>
    </location>
    <ligand>
        <name>Ca(2+)</name>
        <dbReference type="ChEBI" id="CHEBI:29108"/>
        <label>2</label>
    </ligand>
</feature>
<feature type="binding site" evidence="3">
    <location>
        <position position="111"/>
    </location>
    <ligand>
        <name>Ca(2+)</name>
        <dbReference type="ChEBI" id="CHEBI:29108"/>
        <label>2</label>
    </ligand>
</feature>
<feature type="lipid moiety-binding region" description="N-myristoyl glycine" evidence="2">
    <location>
        <position position="2"/>
    </location>
</feature>
<sequence length="206" mass="23653">MGQVASMPHRCGTYVLELHEWYRKFVEECPSGLITLHEFRQFFSDVTVGENSSEYAEQIFRALDNNGDGIVDFREYVTAISMLAHGTPEDKLKWSFKLYDKDGDGAITRSEMLEIMRAVYKMSVVASLTKVNPMTAEECTNRIFVRLDKDQNAIISLQEFVDGSLGDEWVRQMLECDLSTVEIQKMTKHSHLPARSSRERLFHANT</sequence>
<name>GCIP_LITPI</name>
<organism>
    <name type="scientific">Lithobates pipiens</name>
    <name type="common">Northern leopard frog</name>
    <name type="synonym">Rana pipiens</name>
    <dbReference type="NCBI Taxonomy" id="8404"/>
    <lineage>
        <taxon>Eukaryota</taxon>
        <taxon>Metazoa</taxon>
        <taxon>Chordata</taxon>
        <taxon>Craniata</taxon>
        <taxon>Vertebrata</taxon>
        <taxon>Euteleostomi</taxon>
        <taxon>Amphibia</taxon>
        <taxon>Batrachia</taxon>
        <taxon>Anura</taxon>
        <taxon>Neobatrachia</taxon>
        <taxon>Ranoidea</taxon>
        <taxon>Ranidae</taxon>
        <taxon>Lithobates</taxon>
    </lineage>
</organism>
<keyword id="KW-0106">Calcium</keyword>
<keyword id="KW-0449">Lipoprotein</keyword>
<keyword id="KW-0479">Metal-binding</keyword>
<keyword id="KW-0519">Myristate</keyword>
<keyword id="KW-0677">Repeat</keyword>
<keyword id="KW-0716">Sensory transduction</keyword>
<keyword id="KW-0844">Vision</keyword>